<reference key="1">
    <citation type="journal article" date="2007" name="Nat. Biotechnol.">
        <title>Genome sequence and identification of candidate vaccine antigens from the animal pathogen Dichelobacter nodosus.</title>
        <authorList>
            <person name="Myers G.S.A."/>
            <person name="Parker D."/>
            <person name="Al-Hasani K."/>
            <person name="Kennan R.M."/>
            <person name="Seemann T."/>
            <person name="Ren Q."/>
            <person name="Badger J.H."/>
            <person name="Selengut J.D."/>
            <person name="Deboy R.T."/>
            <person name="Tettelin H."/>
            <person name="Boyce J.D."/>
            <person name="McCarl V.P."/>
            <person name="Han X."/>
            <person name="Nelson W.C."/>
            <person name="Madupu R."/>
            <person name="Mohamoud Y."/>
            <person name="Holley T."/>
            <person name="Fedorova N."/>
            <person name="Khouri H."/>
            <person name="Bottomley S.P."/>
            <person name="Whittington R.J."/>
            <person name="Adler B."/>
            <person name="Songer J.G."/>
            <person name="Rood J.I."/>
            <person name="Paulsen I.T."/>
        </authorList>
    </citation>
    <scope>NUCLEOTIDE SEQUENCE [LARGE SCALE GENOMIC DNA]</scope>
    <source>
        <strain>VCS1703A</strain>
    </source>
</reference>
<evidence type="ECO:0000255" key="1">
    <source>
        <dbReference type="HAMAP-Rule" id="MF_00823"/>
    </source>
</evidence>
<evidence type="ECO:0000255" key="2">
    <source>
        <dbReference type="PROSITE-ProRule" id="PRU01137"/>
    </source>
</evidence>
<comment type="function">
    <text evidence="1">Component of the acetyl coenzyme A carboxylase (ACC) complex. First, biotin carboxylase catalyzes the carboxylation of biotin on its carrier protein (BCCP) and then the CO(2) group is transferred by the carboxyltransferase to acetyl-CoA to form malonyl-CoA.</text>
</comment>
<comment type="catalytic activity">
    <reaction evidence="1">
        <text>N(6)-carboxybiotinyl-L-lysyl-[protein] + acetyl-CoA = N(6)-biotinyl-L-lysyl-[protein] + malonyl-CoA</text>
        <dbReference type="Rhea" id="RHEA:54728"/>
        <dbReference type="Rhea" id="RHEA-COMP:10505"/>
        <dbReference type="Rhea" id="RHEA-COMP:10506"/>
        <dbReference type="ChEBI" id="CHEBI:57288"/>
        <dbReference type="ChEBI" id="CHEBI:57384"/>
        <dbReference type="ChEBI" id="CHEBI:83144"/>
        <dbReference type="ChEBI" id="CHEBI:83145"/>
        <dbReference type="EC" id="2.1.3.15"/>
    </reaction>
</comment>
<comment type="pathway">
    <text evidence="1">Lipid metabolism; malonyl-CoA biosynthesis; malonyl-CoA from acetyl-CoA: step 1/1.</text>
</comment>
<comment type="subunit">
    <text evidence="1">Acetyl-CoA carboxylase is a heterohexamer composed of biotin carboxyl carrier protein (AccB), biotin carboxylase (AccC) and two subunits each of ACCase subunit alpha (AccA) and ACCase subunit beta (AccD).</text>
</comment>
<comment type="subcellular location">
    <subcellularLocation>
        <location evidence="1">Cytoplasm</location>
    </subcellularLocation>
</comment>
<comment type="similarity">
    <text evidence="1">Belongs to the AccA family.</text>
</comment>
<gene>
    <name evidence="1" type="primary">accA</name>
    <name type="ordered locus">DNO_1091</name>
</gene>
<feature type="chain" id="PRO_1000062610" description="Acetyl-coenzyme A carboxylase carboxyl transferase subunit alpha">
    <location>
        <begin position="1"/>
        <end position="319"/>
    </location>
</feature>
<feature type="domain" description="CoA carboxyltransferase C-terminal" evidence="2">
    <location>
        <begin position="36"/>
        <end position="293"/>
    </location>
</feature>
<protein>
    <recommendedName>
        <fullName evidence="1">Acetyl-coenzyme A carboxylase carboxyl transferase subunit alpha</fullName>
        <shortName evidence="1">ACCase subunit alpha</shortName>
        <shortName evidence="1">Acetyl-CoA carboxylase carboxyltransferase subunit alpha</shortName>
        <ecNumber evidence="1">2.1.3.15</ecNumber>
    </recommendedName>
</protein>
<organism>
    <name type="scientific">Dichelobacter nodosus (strain VCS1703A)</name>
    <dbReference type="NCBI Taxonomy" id="246195"/>
    <lineage>
        <taxon>Bacteria</taxon>
        <taxon>Pseudomonadati</taxon>
        <taxon>Pseudomonadota</taxon>
        <taxon>Gammaproteobacteria</taxon>
        <taxon>Cardiobacteriales</taxon>
        <taxon>Cardiobacteriaceae</taxon>
        <taxon>Dichelobacter</taxon>
    </lineage>
</organism>
<name>ACCA_DICNV</name>
<proteinExistence type="inferred from homology"/>
<sequence>MNPEYLDFEQPIAELEYKLNELKQFSEQSKVDISDEVERLKTKLERLTGDIYSDLSDWQIAQVARHPKRPYTLDYIPHIFTDFRELHGDRHYADDMAIVGGLARLGQRSVMVIGHEKGRDTKAKVSRNFGMPRPEGYRKALRLMKLAEKFKIPVITFIDTPGAYPGVGAEKRGQSEAIARNLYEMAVLNTPIIACVIGEGGSGGALALGVADTVMMLQYGMYSVISPEGCASILWRDAAMAEEAVTILQVTSTRLKKLNLIDTIITEPSGGAHRDVAEMSRTLHDAFLSELDRLEAMDDATRIHQRLQKLRAYGNFLGE</sequence>
<keyword id="KW-0067">ATP-binding</keyword>
<keyword id="KW-0963">Cytoplasm</keyword>
<keyword id="KW-0275">Fatty acid biosynthesis</keyword>
<keyword id="KW-0276">Fatty acid metabolism</keyword>
<keyword id="KW-0444">Lipid biosynthesis</keyword>
<keyword id="KW-0443">Lipid metabolism</keyword>
<keyword id="KW-0547">Nucleotide-binding</keyword>
<keyword id="KW-1185">Reference proteome</keyword>
<keyword id="KW-0808">Transferase</keyword>
<accession>A5EXQ5</accession>
<dbReference type="EC" id="2.1.3.15" evidence="1"/>
<dbReference type="EMBL" id="CP000513">
    <property type="protein sequence ID" value="ABQ13586.1"/>
    <property type="molecule type" value="Genomic_DNA"/>
</dbReference>
<dbReference type="RefSeq" id="WP_012031395.1">
    <property type="nucleotide sequence ID" value="NC_009446.1"/>
</dbReference>
<dbReference type="SMR" id="A5EXQ5"/>
<dbReference type="STRING" id="246195.DNO_1091"/>
<dbReference type="KEGG" id="dno:DNO_1091"/>
<dbReference type="eggNOG" id="COG0825">
    <property type="taxonomic scope" value="Bacteria"/>
</dbReference>
<dbReference type="HOGENOM" id="CLU_015486_0_2_6"/>
<dbReference type="OrthoDB" id="9808023at2"/>
<dbReference type="UniPathway" id="UPA00655">
    <property type="reaction ID" value="UER00711"/>
</dbReference>
<dbReference type="Proteomes" id="UP000000248">
    <property type="component" value="Chromosome"/>
</dbReference>
<dbReference type="GO" id="GO:0009317">
    <property type="term" value="C:acetyl-CoA carboxylase complex"/>
    <property type="evidence" value="ECO:0007669"/>
    <property type="project" value="InterPro"/>
</dbReference>
<dbReference type="GO" id="GO:0003989">
    <property type="term" value="F:acetyl-CoA carboxylase activity"/>
    <property type="evidence" value="ECO:0007669"/>
    <property type="project" value="InterPro"/>
</dbReference>
<dbReference type="GO" id="GO:0005524">
    <property type="term" value="F:ATP binding"/>
    <property type="evidence" value="ECO:0007669"/>
    <property type="project" value="UniProtKB-KW"/>
</dbReference>
<dbReference type="GO" id="GO:0016743">
    <property type="term" value="F:carboxyl- or carbamoyltransferase activity"/>
    <property type="evidence" value="ECO:0007669"/>
    <property type="project" value="UniProtKB-UniRule"/>
</dbReference>
<dbReference type="GO" id="GO:0006633">
    <property type="term" value="P:fatty acid biosynthetic process"/>
    <property type="evidence" value="ECO:0007669"/>
    <property type="project" value="UniProtKB-KW"/>
</dbReference>
<dbReference type="GO" id="GO:2001295">
    <property type="term" value="P:malonyl-CoA biosynthetic process"/>
    <property type="evidence" value="ECO:0007669"/>
    <property type="project" value="UniProtKB-UniRule"/>
</dbReference>
<dbReference type="Gene3D" id="3.90.226.10">
    <property type="entry name" value="2-enoyl-CoA Hydratase, Chain A, domain 1"/>
    <property type="match status" value="1"/>
</dbReference>
<dbReference type="HAMAP" id="MF_00823">
    <property type="entry name" value="AcetylCoA_CT_alpha"/>
    <property type="match status" value="1"/>
</dbReference>
<dbReference type="InterPro" id="IPR001095">
    <property type="entry name" value="Acetyl_CoA_COase_a_su"/>
</dbReference>
<dbReference type="InterPro" id="IPR029045">
    <property type="entry name" value="ClpP/crotonase-like_dom_sf"/>
</dbReference>
<dbReference type="InterPro" id="IPR011763">
    <property type="entry name" value="COA_CT_C"/>
</dbReference>
<dbReference type="NCBIfam" id="TIGR00513">
    <property type="entry name" value="accA"/>
    <property type="match status" value="1"/>
</dbReference>
<dbReference type="NCBIfam" id="NF041504">
    <property type="entry name" value="AccA_sub"/>
    <property type="match status" value="1"/>
</dbReference>
<dbReference type="NCBIfam" id="NF004344">
    <property type="entry name" value="PRK05724.1"/>
    <property type="match status" value="1"/>
</dbReference>
<dbReference type="PANTHER" id="PTHR42853">
    <property type="entry name" value="ACETYL-COENZYME A CARBOXYLASE CARBOXYL TRANSFERASE SUBUNIT ALPHA"/>
    <property type="match status" value="1"/>
</dbReference>
<dbReference type="PANTHER" id="PTHR42853:SF3">
    <property type="entry name" value="ACETYL-COENZYME A CARBOXYLASE CARBOXYL TRANSFERASE SUBUNIT ALPHA, CHLOROPLASTIC"/>
    <property type="match status" value="1"/>
</dbReference>
<dbReference type="Pfam" id="PF03255">
    <property type="entry name" value="ACCA"/>
    <property type="match status" value="1"/>
</dbReference>
<dbReference type="PRINTS" id="PR01069">
    <property type="entry name" value="ACCCTRFRASEA"/>
</dbReference>
<dbReference type="SUPFAM" id="SSF52096">
    <property type="entry name" value="ClpP/crotonase"/>
    <property type="match status" value="1"/>
</dbReference>
<dbReference type="PROSITE" id="PS50989">
    <property type="entry name" value="COA_CT_CTER"/>
    <property type="match status" value="1"/>
</dbReference>